<sequence>MSAKSSNLVSVGRITAVYGIKGWVKVHSYTEPQDNLFEYHPWWVKTRHGVKQVEIDEARPHGDAYVAHIKGVDDRDLAMAYTAADIAVERDLLPELEDGEYYWNQLEGLSVFTVFGGEQRLGVVTKLLETGANDVLVVQGDAQSIDQRERLIPYVPGQFVLSVDLDSKRILVDWDPEF</sequence>
<organism>
    <name type="scientific">Cellvibrio japonicus (strain Ueda107)</name>
    <name type="common">Pseudomonas fluorescens subsp. cellulosa</name>
    <dbReference type="NCBI Taxonomy" id="498211"/>
    <lineage>
        <taxon>Bacteria</taxon>
        <taxon>Pseudomonadati</taxon>
        <taxon>Pseudomonadota</taxon>
        <taxon>Gammaproteobacteria</taxon>
        <taxon>Cellvibrionales</taxon>
        <taxon>Cellvibrionaceae</taxon>
        <taxon>Cellvibrio</taxon>
    </lineage>
</organism>
<proteinExistence type="inferred from homology"/>
<dbReference type="EMBL" id="CP000934">
    <property type="protein sequence ID" value="ACE84515.1"/>
    <property type="molecule type" value="Genomic_DNA"/>
</dbReference>
<dbReference type="RefSeq" id="WP_012487066.1">
    <property type="nucleotide sequence ID" value="NC_010995.1"/>
</dbReference>
<dbReference type="SMR" id="B3PDH6"/>
<dbReference type="STRING" id="498211.CJA_1434"/>
<dbReference type="KEGG" id="cja:CJA_1434"/>
<dbReference type="eggNOG" id="COG0806">
    <property type="taxonomic scope" value="Bacteria"/>
</dbReference>
<dbReference type="HOGENOM" id="CLU_077636_1_0_6"/>
<dbReference type="OrthoDB" id="9783509at2"/>
<dbReference type="Proteomes" id="UP000001036">
    <property type="component" value="Chromosome"/>
</dbReference>
<dbReference type="GO" id="GO:0005737">
    <property type="term" value="C:cytoplasm"/>
    <property type="evidence" value="ECO:0007669"/>
    <property type="project" value="UniProtKB-SubCell"/>
</dbReference>
<dbReference type="GO" id="GO:0005840">
    <property type="term" value="C:ribosome"/>
    <property type="evidence" value="ECO:0007669"/>
    <property type="project" value="InterPro"/>
</dbReference>
<dbReference type="GO" id="GO:0043022">
    <property type="term" value="F:ribosome binding"/>
    <property type="evidence" value="ECO:0007669"/>
    <property type="project" value="InterPro"/>
</dbReference>
<dbReference type="GO" id="GO:0042274">
    <property type="term" value="P:ribosomal small subunit biogenesis"/>
    <property type="evidence" value="ECO:0007669"/>
    <property type="project" value="UniProtKB-UniRule"/>
</dbReference>
<dbReference type="GO" id="GO:0006364">
    <property type="term" value="P:rRNA processing"/>
    <property type="evidence" value="ECO:0007669"/>
    <property type="project" value="UniProtKB-UniRule"/>
</dbReference>
<dbReference type="Gene3D" id="2.30.30.240">
    <property type="entry name" value="PRC-barrel domain"/>
    <property type="match status" value="1"/>
</dbReference>
<dbReference type="Gene3D" id="2.40.30.60">
    <property type="entry name" value="RimM"/>
    <property type="match status" value="1"/>
</dbReference>
<dbReference type="HAMAP" id="MF_00014">
    <property type="entry name" value="Ribosome_mat_RimM"/>
    <property type="match status" value="1"/>
</dbReference>
<dbReference type="InterPro" id="IPR011033">
    <property type="entry name" value="PRC_barrel-like_sf"/>
</dbReference>
<dbReference type="InterPro" id="IPR056792">
    <property type="entry name" value="PRC_RimM"/>
</dbReference>
<dbReference type="InterPro" id="IPR011961">
    <property type="entry name" value="RimM"/>
</dbReference>
<dbReference type="InterPro" id="IPR002676">
    <property type="entry name" value="RimM_N"/>
</dbReference>
<dbReference type="InterPro" id="IPR036976">
    <property type="entry name" value="RimM_N_sf"/>
</dbReference>
<dbReference type="InterPro" id="IPR009000">
    <property type="entry name" value="Transl_B-barrel_sf"/>
</dbReference>
<dbReference type="NCBIfam" id="TIGR02273">
    <property type="entry name" value="16S_RimM"/>
    <property type="match status" value="1"/>
</dbReference>
<dbReference type="PANTHER" id="PTHR33692">
    <property type="entry name" value="RIBOSOME MATURATION FACTOR RIMM"/>
    <property type="match status" value="1"/>
</dbReference>
<dbReference type="PANTHER" id="PTHR33692:SF1">
    <property type="entry name" value="RIBOSOME MATURATION FACTOR RIMM"/>
    <property type="match status" value="1"/>
</dbReference>
<dbReference type="Pfam" id="PF24986">
    <property type="entry name" value="PRC_RimM"/>
    <property type="match status" value="1"/>
</dbReference>
<dbReference type="Pfam" id="PF01782">
    <property type="entry name" value="RimM"/>
    <property type="match status" value="1"/>
</dbReference>
<dbReference type="SUPFAM" id="SSF50346">
    <property type="entry name" value="PRC-barrel domain"/>
    <property type="match status" value="1"/>
</dbReference>
<dbReference type="SUPFAM" id="SSF50447">
    <property type="entry name" value="Translation proteins"/>
    <property type="match status" value="1"/>
</dbReference>
<keyword id="KW-0143">Chaperone</keyword>
<keyword id="KW-0963">Cytoplasm</keyword>
<keyword id="KW-1185">Reference proteome</keyword>
<keyword id="KW-0690">Ribosome biogenesis</keyword>
<keyword id="KW-0698">rRNA processing</keyword>
<accession>B3PDH6</accession>
<name>RIMM_CELJU</name>
<gene>
    <name evidence="1" type="primary">rimM</name>
    <name type="ordered locus">CJA_1434</name>
</gene>
<comment type="function">
    <text evidence="1">An accessory protein needed during the final step in the assembly of 30S ribosomal subunit, possibly for assembly of the head region. Essential for efficient processing of 16S rRNA. May be needed both before and after RbfA during the maturation of 16S rRNA. It has affinity for free ribosomal 30S subunits but not for 70S ribosomes.</text>
</comment>
<comment type="subunit">
    <text evidence="1">Binds ribosomal protein uS19.</text>
</comment>
<comment type="subcellular location">
    <subcellularLocation>
        <location evidence="1">Cytoplasm</location>
    </subcellularLocation>
</comment>
<comment type="domain">
    <text evidence="1">The PRC barrel domain binds ribosomal protein uS19.</text>
</comment>
<comment type="similarity">
    <text evidence="1">Belongs to the RimM family.</text>
</comment>
<evidence type="ECO:0000255" key="1">
    <source>
        <dbReference type="HAMAP-Rule" id="MF_00014"/>
    </source>
</evidence>
<protein>
    <recommendedName>
        <fullName evidence="1">Ribosome maturation factor RimM</fullName>
    </recommendedName>
</protein>
<reference key="1">
    <citation type="journal article" date="2008" name="J. Bacteriol.">
        <title>Insights into plant cell wall degradation from the genome sequence of the soil bacterium Cellvibrio japonicus.</title>
        <authorList>
            <person name="DeBoy R.T."/>
            <person name="Mongodin E.F."/>
            <person name="Fouts D.E."/>
            <person name="Tailford L.E."/>
            <person name="Khouri H."/>
            <person name="Emerson J.B."/>
            <person name="Mohamoud Y."/>
            <person name="Watkins K."/>
            <person name="Henrissat B."/>
            <person name="Gilbert H.J."/>
            <person name="Nelson K.E."/>
        </authorList>
    </citation>
    <scope>NUCLEOTIDE SEQUENCE [LARGE SCALE GENOMIC DNA]</scope>
    <source>
        <strain>Ueda107</strain>
    </source>
</reference>
<feature type="chain" id="PRO_0000351743" description="Ribosome maturation factor RimM">
    <location>
        <begin position="1"/>
        <end position="178"/>
    </location>
</feature>
<feature type="domain" description="PRC barrel" evidence="1">
    <location>
        <begin position="98"/>
        <end position="178"/>
    </location>
</feature>